<dbReference type="EMBL" id="CP001139">
    <property type="protein sequence ID" value="ACH66227.1"/>
    <property type="molecule type" value="Genomic_DNA"/>
</dbReference>
<dbReference type="RefSeq" id="WP_005420184.1">
    <property type="nucleotide sequence ID" value="NC_011184.1"/>
</dbReference>
<dbReference type="SMR" id="B5FG65"/>
<dbReference type="GeneID" id="54164465"/>
<dbReference type="KEGG" id="vfm:VFMJ11_1893"/>
<dbReference type="HOGENOM" id="CLU_134358_2_1_6"/>
<dbReference type="Proteomes" id="UP000001857">
    <property type="component" value="Chromosome I"/>
</dbReference>
<dbReference type="GO" id="GO:0030163">
    <property type="term" value="P:protein catabolic process"/>
    <property type="evidence" value="ECO:0007669"/>
    <property type="project" value="InterPro"/>
</dbReference>
<dbReference type="GO" id="GO:0006508">
    <property type="term" value="P:proteolysis"/>
    <property type="evidence" value="ECO:0007669"/>
    <property type="project" value="UniProtKB-UniRule"/>
</dbReference>
<dbReference type="FunFam" id="3.30.1390.10:FF:000002">
    <property type="entry name" value="ATP-dependent Clp protease adapter protein ClpS"/>
    <property type="match status" value="1"/>
</dbReference>
<dbReference type="Gene3D" id="3.30.1390.10">
    <property type="match status" value="1"/>
</dbReference>
<dbReference type="HAMAP" id="MF_00302">
    <property type="entry name" value="ClpS"/>
    <property type="match status" value="1"/>
</dbReference>
<dbReference type="InterPro" id="IPR022935">
    <property type="entry name" value="ClpS"/>
</dbReference>
<dbReference type="InterPro" id="IPR003769">
    <property type="entry name" value="ClpS_core"/>
</dbReference>
<dbReference type="InterPro" id="IPR014719">
    <property type="entry name" value="Ribosomal_bL12_C/ClpS-like"/>
</dbReference>
<dbReference type="NCBIfam" id="NF000670">
    <property type="entry name" value="PRK00033.1-3"/>
    <property type="match status" value="1"/>
</dbReference>
<dbReference type="NCBIfam" id="NF000672">
    <property type="entry name" value="PRK00033.1-5"/>
    <property type="match status" value="1"/>
</dbReference>
<dbReference type="PANTHER" id="PTHR33473:SF19">
    <property type="entry name" value="ATP-DEPENDENT CLP PROTEASE ADAPTER PROTEIN CLPS"/>
    <property type="match status" value="1"/>
</dbReference>
<dbReference type="PANTHER" id="PTHR33473">
    <property type="entry name" value="ATP-DEPENDENT CLP PROTEASE ADAPTER PROTEIN CLPS1, CHLOROPLASTIC"/>
    <property type="match status" value="1"/>
</dbReference>
<dbReference type="Pfam" id="PF02617">
    <property type="entry name" value="ClpS"/>
    <property type="match status" value="1"/>
</dbReference>
<dbReference type="SUPFAM" id="SSF54736">
    <property type="entry name" value="ClpS-like"/>
    <property type="match status" value="1"/>
</dbReference>
<evidence type="ECO:0000255" key="1">
    <source>
        <dbReference type="HAMAP-Rule" id="MF_00302"/>
    </source>
</evidence>
<feature type="chain" id="PRO_1000115485" description="ATP-dependent Clp protease adapter protein ClpS">
    <location>
        <begin position="1"/>
        <end position="106"/>
    </location>
</feature>
<sequence length="106" mass="12204">MSKLYEWISPDSDVLEQEKTELRPPSMYKVVLNNDDYTPMEFVVEVLDKFFSMDLEKATQLMLTVHYEGKAVCGTFTAEVAETKVAQVNTYSRDNEHPLLCTMEQA</sequence>
<proteinExistence type="inferred from homology"/>
<protein>
    <recommendedName>
        <fullName evidence="1">ATP-dependent Clp protease adapter protein ClpS</fullName>
    </recommendedName>
</protein>
<accession>B5FG65</accession>
<name>CLPS_ALIFM</name>
<organism>
    <name type="scientific">Aliivibrio fischeri (strain MJ11)</name>
    <name type="common">Vibrio fischeri</name>
    <dbReference type="NCBI Taxonomy" id="388396"/>
    <lineage>
        <taxon>Bacteria</taxon>
        <taxon>Pseudomonadati</taxon>
        <taxon>Pseudomonadota</taxon>
        <taxon>Gammaproteobacteria</taxon>
        <taxon>Vibrionales</taxon>
        <taxon>Vibrionaceae</taxon>
        <taxon>Aliivibrio</taxon>
    </lineage>
</organism>
<comment type="function">
    <text evidence="1">Involved in the modulation of the specificity of the ClpAP-mediated ATP-dependent protein degradation.</text>
</comment>
<comment type="subunit">
    <text evidence="1">Binds to the N-terminal domain of the chaperone ClpA.</text>
</comment>
<comment type="similarity">
    <text evidence="1">Belongs to the ClpS family.</text>
</comment>
<reference key="1">
    <citation type="submission" date="2008-08" db="EMBL/GenBank/DDBJ databases">
        <title>Complete sequence of Vibrio fischeri strain MJ11.</title>
        <authorList>
            <person name="Mandel M.J."/>
            <person name="Stabb E.V."/>
            <person name="Ruby E.G."/>
            <person name="Ferriera S."/>
            <person name="Johnson J."/>
            <person name="Kravitz S."/>
            <person name="Beeson K."/>
            <person name="Sutton G."/>
            <person name="Rogers Y.-H."/>
            <person name="Friedman R."/>
            <person name="Frazier M."/>
            <person name="Venter J.C."/>
        </authorList>
    </citation>
    <scope>NUCLEOTIDE SEQUENCE [LARGE SCALE GENOMIC DNA]</scope>
    <source>
        <strain>MJ11</strain>
    </source>
</reference>
<gene>
    <name evidence="1" type="primary">clpS</name>
    <name type="ordered locus">VFMJ11_1893</name>
</gene>